<comment type="function">
    <text evidence="1">Catalyzes a base-exchange reaction in which the polar head group of phosphatidylethanolamine (PE) or phosphatidylcholine (PC) is replaced by L-serine (By similarity). Catalyzes the conversion of phosphatatidylethanolamine and does not act on phosphatidylcholine (By similarity). Can utilize both phosphatidylethanolamine (PE) plasmalogen and diacyl PE as substrate and the latter is six times better utilized, indicating the importance of an ester linkage at the sn-1 position (By similarity). Although it shows no sn-1 fatty acyl preference, exhibits significant preference towards docosahexaenoic acid (22:6n-3) compared with 18:1 or 20:4 at the sn-2 position (By similarity).</text>
</comment>
<comment type="catalytic activity">
    <reaction evidence="1">
        <text>a 1,2-diacyl-sn-glycero-3-phosphoethanolamine + L-serine = a 1,2-diacyl-sn-glycero-3-phospho-L-serine + ethanolamine</text>
        <dbReference type="Rhea" id="RHEA:27606"/>
        <dbReference type="ChEBI" id="CHEBI:33384"/>
        <dbReference type="ChEBI" id="CHEBI:57262"/>
        <dbReference type="ChEBI" id="CHEBI:57603"/>
        <dbReference type="ChEBI" id="CHEBI:64612"/>
        <dbReference type="EC" id="2.7.8.29"/>
    </reaction>
    <physiologicalReaction direction="left-to-right" evidence="1">
        <dbReference type="Rhea" id="RHEA:27607"/>
    </physiologicalReaction>
</comment>
<comment type="catalytic activity">
    <reaction evidence="1">
        <text>1-hexadecanoyl-2-(9Z-octadecenoyl)-sn-glycero-3-phosphoethanolamine + L-serine = 1-hexadecanoyl-2-(9Z-octadecenoyl)-sn-glycero-3-phospho-L-serine + ethanolamine</text>
        <dbReference type="Rhea" id="RHEA:41484"/>
        <dbReference type="ChEBI" id="CHEBI:33384"/>
        <dbReference type="ChEBI" id="CHEBI:57603"/>
        <dbReference type="ChEBI" id="CHEBI:73007"/>
        <dbReference type="ChEBI" id="CHEBI:75029"/>
    </reaction>
    <physiologicalReaction direction="left-to-right" evidence="1">
        <dbReference type="Rhea" id="RHEA:41485"/>
    </physiologicalReaction>
</comment>
<comment type="catalytic activity">
    <reaction evidence="1">
        <text>1-hexadecanoyl-2-(4Z,7Z,10Z,13Z,16Z,19Z-docosahexaenoyl)-sn-glycero-3-phosphoethanolamine + L-serine = 1-hexadecanoyl-2-(4Z,7Z,10Z,13Z,16Z,19Z-docosahexaenoyl)-sn-glycero-3-phosphoserine + ethanolamine</text>
        <dbReference type="Rhea" id="RHEA:41488"/>
        <dbReference type="ChEBI" id="CHEBI:33384"/>
        <dbReference type="ChEBI" id="CHEBI:57603"/>
        <dbReference type="ChEBI" id="CHEBI:78261"/>
        <dbReference type="ChEBI" id="CHEBI:78262"/>
    </reaction>
    <physiologicalReaction direction="left-to-right" evidence="1">
        <dbReference type="Rhea" id="RHEA:41489"/>
    </physiologicalReaction>
</comment>
<comment type="catalytic activity">
    <reaction evidence="1">
        <text>1-octadecanoyl-2-(5Z,8Z,11Z,14Z)-eicosatetraenoyl-sn-glycero-3-phosphoethanolamine + L-serine = 1-octadecanoyl-2-(5Z,8Z,11Z,14Z)-eicosatetraenoyl-sn-glycero-3-phosphoserine + ethanolamine</text>
        <dbReference type="Rhea" id="RHEA:41500"/>
        <dbReference type="ChEBI" id="CHEBI:33384"/>
        <dbReference type="ChEBI" id="CHEBI:57603"/>
        <dbReference type="ChEBI" id="CHEBI:78268"/>
        <dbReference type="ChEBI" id="CHEBI:78269"/>
    </reaction>
    <physiologicalReaction direction="left-to-right" evidence="1">
        <dbReference type="Rhea" id="RHEA:41501"/>
    </physiologicalReaction>
</comment>
<comment type="catalytic activity">
    <reaction evidence="1">
        <text>1-octadecanoyl-2-(4Z,7Z,10Z,13Z,16Z,19Z-docosahexaenoyl)-sn-glycero-3-phosphoethanolamine + L-serine = 1-octadecanoyl-2-(4Z,7Z,10Z,13Z,16Z,19Z-docosahexaenoyl)-sn-glycero-3-phosphoserine + ethanolamine</text>
        <dbReference type="Rhea" id="RHEA:41492"/>
        <dbReference type="ChEBI" id="CHEBI:33384"/>
        <dbReference type="ChEBI" id="CHEBI:57603"/>
        <dbReference type="ChEBI" id="CHEBI:78265"/>
        <dbReference type="ChEBI" id="CHEBI:78266"/>
    </reaction>
    <physiologicalReaction direction="left-to-right" evidence="1">
        <dbReference type="Rhea" id="RHEA:41493"/>
    </physiologicalReaction>
</comment>
<comment type="catalytic activity">
    <reaction evidence="1">
        <text>1-(1Z-octadecenyl)-2-(4Z,7Z,10Z,13Z,16Z,19Z-docosahexaenoyl)-sn-glycero-3-phosphoethanolamine + L-serine = 1-(1Z-octadecenyl)-2-(4Z,7Z,10Z,13Z,16Z,19Z-docosahexaenoyl)-sn-glycero-3-phospho-L-serine + ethanolamine</text>
        <dbReference type="Rhea" id="RHEA:41496"/>
        <dbReference type="ChEBI" id="CHEBI:33384"/>
        <dbReference type="ChEBI" id="CHEBI:57603"/>
        <dbReference type="ChEBI" id="CHEBI:78263"/>
        <dbReference type="ChEBI" id="CHEBI:78264"/>
    </reaction>
    <physiologicalReaction direction="left-to-right" evidence="1">
        <dbReference type="Rhea" id="RHEA:41497"/>
    </physiologicalReaction>
</comment>
<comment type="catalytic activity">
    <reaction evidence="1">
        <text>1-octadecanoyl-2-(9Z-octadecenoyl)-sn-glycero-3-phosphoethanolamine + L-serine = 1-octadecanoyl-2-(9Z-octadecenoyl)-sn-glycero-3-phospho-L-serine + ethanolamine</text>
        <dbReference type="Rhea" id="RHEA:40795"/>
        <dbReference type="ChEBI" id="CHEBI:33384"/>
        <dbReference type="ChEBI" id="CHEBI:57603"/>
        <dbReference type="ChEBI" id="CHEBI:75038"/>
        <dbReference type="ChEBI" id="CHEBI:78260"/>
    </reaction>
    <physiologicalReaction direction="left-to-right" evidence="1">
        <dbReference type="Rhea" id="RHEA:40796"/>
    </physiologicalReaction>
</comment>
<comment type="catalytic activity">
    <reaction evidence="1">
        <text>1-(1Z-octadecenyl)-2-(9Z-octadecenoyl)-sn-glycero-3-phosphoethanolamine + L-serine = 1-(1Z-octadecenyl)-2-(9Z-octadecenoyl)-sn-glycero-3-phospho-L-serine + ethanolamine</text>
        <dbReference type="Rhea" id="RHEA:41600"/>
        <dbReference type="ChEBI" id="CHEBI:33384"/>
        <dbReference type="ChEBI" id="CHEBI:57603"/>
        <dbReference type="ChEBI" id="CHEBI:78340"/>
        <dbReference type="ChEBI" id="CHEBI:78341"/>
    </reaction>
    <physiologicalReaction direction="left-to-right" evidence="1">
        <dbReference type="Rhea" id="RHEA:41601"/>
    </physiologicalReaction>
</comment>
<comment type="catalytic activity">
    <reaction evidence="1">
        <text>1-(1Z-octadecenyl)-2-(5Z,8Z,11Z,14Z- eicosatetraenoyl)-sn-glycero-3-phosphoethanolamine + L-serine = 1-(1Z-octadecenyl)-2-(5Z,8Z,11Z,14Z-eicosatetraenoyl)-sn-glycero-3-phospho-L-serine + ethanolamine</text>
        <dbReference type="Rhea" id="RHEA:41604"/>
        <dbReference type="ChEBI" id="CHEBI:33384"/>
        <dbReference type="ChEBI" id="CHEBI:57603"/>
        <dbReference type="ChEBI" id="CHEBI:78342"/>
        <dbReference type="ChEBI" id="CHEBI:78343"/>
    </reaction>
    <physiologicalReaction direction="left-to-right" evidence="1">
        <dbReference type="Rhea" id="RHEA:41605"/>
    </physiologicalReaction>
</comment>
<comment type="pathway">
    <text>Phospholipid metabolism; phosphatidylserine biosynthesis.</text>
</comment>
<comment type="subcellular location">
    <subcellularLocation>
        <location evidence="1">Endoplasmic reticulum membrane</location>
        <topology evidence="2">Multi-pass membrane protein</topology>
    </subcellularLocation>
    <text evidence="1">Highly enriched in the mitochondria-associated membrane (MAM).</text>
</comment>
<comment type="similarity">
    <text evidence="3">Belongs to the phosphatidyl serine synthase family.</text>
</comment>
<gene>
    <name type="primary">PTDSS1</name>
</gene>
<name>PTSS2_CHICK</name>
<organism>
    <name type="scientific">Gallus gallus</name>
    <name type="common">Chicken</name>
    <dbReference type="NCBI Taxonomy" id="9031"/>
    <lineage>
        <taxon>Eukaryota</taxon>
        <taxon>Metazoa</taxon>
        <taxon>Chordata</taxon>
        <taxon>Craniata</taxon>
        <taxon>Vertebrata</taxon>
        <taxon>Euteleostomi</taxon>
        <taxon>Archelosauria</taxon>
        <taxon>Archosauria</taxon>
        <taxon>Dinosauria</taxon>
        <taxon>Saurischia</taxon>
        <taxon>Theropoda</taxon>
        <taxon>Coelurosauria</taxon>
        <taxon>Aves</taxon>
        <taxon>Neognathae</taxon>
        <taxon>Galloanserae</taxon>
        <taxon>Galliformes</taxon>
        <taxon>Phasianidae</taxon>
        <taxon>Phasianinae</taxon>
        <taxon>Gallus</taxon>
    </lineage>
</organism>
<accession>E1BYA3</accession>
<evidence type="ECO:0000250" key="1">
    <source>
        <dbReference type="UniProtKB" id="Q9Z1X2"/>
    </source>
</evidence>
<evidence type="ECO:0000255" key="2"/>
<evidence type="ECO:0000305" key="3"/>
<dbReference type="EC" id="2.7.8.29" evidence="1"/>
<dbReference type="EMBL" id="AADN02040056">
    <property type="status" value="NOT_ANNOTATED_CDS"/>
    <property type="molecule type" value="Genomic_DNA"/>
</dbReference>
<dbReference type="SMR" id="E1BYA3"/>
<dbReference type="FunCoup" id="E1BYA3">
    <property type="interactions" value="932"/>
</dbReference>
<dbReference type="STRING" id="9031.ENSGALP00000006841"/>
<dbReference type="GlyCosmos" id="E1BYA3">
    <property type="glycosylation" value="2 sites, No reported glycans"/>
</dbReference>
<dbReference type="GlyGen" id="E1BYA3">
    <property type="glycosylation" value="2 sites"/>
</dbReference>
<dbReference type="PaxDb" id="9031-ENSGALP00000006841"/>
<dbReference type="VEuPathDB" id="HostDB:geneid_422997"/>
<dbReference type="eggNOG" id="KOG2735">
    <property type="taxonomic scope" value="Eukaryota"/>
</dbReference>
<dbReference type="InParanoid" id="E1BYA3"/>
<dbReference type="OrthoDB" id="10265393at2759"/>
<dbReference type="PhylomeDB" id="E1BYA3"/>
<dbReference type="TreeFam" id="TF300012"/>
<dbReference type="UniPathway" id="UPA00948"/>
<dbReference type="Proteomes" id="UP000000539">
    <property type="component" value="Unassembled WGS sequence"/>
</dbReference>
<dbReference type="GO" id="GO:0005789">
    <property type="term" value="C:endoplasmic reticulum membrane"/>
    <property type="evidence" value="ECO:0007669"/>
    <property type="project" value="UniProtKB-SubCell"/>
</dbReference>
<dbReference type="GO" id="GO:0106245">
    <property type="term" value="F:L-serine-phosphatidylethanolamine phosphatidyltransferase activity"/>
    <property type="evidence" value="ECO:0007669"/>
    <property type="project" value="UniProtKB-EC"/>
</dbReference>
<dbReference type="GO" id="GO:0006659">
    <property type="term" value="P:phosphatidylserine biosynthetic process"/>
    <property type="evidence" value="ECO:0007669"/>
    <property type="project" value="UniProtKB-UniPathway"/>
</dbReference>
<dbReference type="InterPro" id="IPR004277">
    <property type="entry name" value="PSS"/>
</dbReference>
<dbReference type="PANTHER" id="PTHR15362">
    <property type="entry name" value="PHOSPHATIDYLINOSITOL SYNTHASE"/>
    <property type="match status" value="1"/>
</dbReference>
<dbReference type="PANTHER" id="PTHR15362:SF7">
    <property type="entry name" value="PHOSPHATIDYLSERINE SYNTHASE 2"/>
    <property type="match status" value="1"/>
</dbReference>
<dbReference type="Pfam" id="PF03034">
    <property type="entry name" value="PSS"/>
    <property type="match status" value="1"/>
</dbReference>
<sequence length="442" mass="52146">MRRGERRGPAGPLGDGPALGLRRSTESEVYDDGTNTFFWRAHTLTVLFILTCALGYVTLLEETPQDTAYNTKRGIVASILVFLCFGVTQAKDGPFSRPHPAYWRFWLCVSVVYELFLIFILFQTVQDGRQFMKYIDPHLGVPLPERDYGGNCLIYDPGNESDPFHNIWDKLDGFVPAHFFGWYLKTLMIRDWWMCMIISVMFEFLEYSLEHQLPNFSECWWDHWIMDVILCNGLGIYCGMKTLSWLSLKTYKWQGLWNIPTYKGKMKRIVFQFTPYSWVKFEWKPASSLRRWLAVCGIIFVFLLAELNTFYLKFVLWMPPEHYLVLLRLVFFVNVGGVAMREIYDFMDDPKFHKKLGQQAWLVAAITATEFLIVVKYDPYTLTLSLPFYITQCWILGIILVLTWTAWRFFIRDITLRYKEIRRQKQEHKYEKDKCLSNGDGH</sequence>
<reference key="1">
    <citation type="journal article" date="2004" name="Nature">
        <title>Sequence and comparative analysis of the chicken genome provide unique perspectives on vertebrate evolution.</title>
        <authorList>
            <person name="Hillier L.W."/>
            <person name="Miller W."/>
            <person name="Birney E."/>
            <person name="Warren W."/>
            <person name="Hardison R.C."/>
            <person name="Ponting C.P."/>
            <person name="Bork P."/>
            <person name="Burt D.W."/>
            <person name="Groenen M.A.M."/>
            <person name="Delany M.E."/>
            <person name="Dodgson J.B."/>
            <person name="Chinwalla A.T."/>
            <person name="Cliften P.F."/>
            <person name="Clifton S.W."/>
            <person name="Delehaunty K.D."/>
            <person name="Fronick C."/>
            <person name="Fulton R.S."/>
            <person name="Graves T.A."/>
            <person name="Kremitzki C."/>
            <person name="Layman D."/>
            <person name="Magrini V."/>
            <person name="McPherson J.D."/>
            <person name="Miner T.L."/>
            <person name="Minx P."/>
            <person name="Nash W.E."/>
            <person name="Nhan M.N."/>
            <person name="Nelson J.O."/>
            <person name="Oddy L.G."/>
            <person name="Pohl C.S."/>
            <person name="Randall-Maher J."/>
            <person name="Smith S.M."/>
            <person name="Wallis J.W."/>
            <person name="Yang S.-P."/>
            <person name="Romanov M.N."/>
            <person name="Rondelli C.M."/>
            <person name="Paton B."/>
            <person name="Smith J."/>
            <person name="Morrice D."/>
            <person name="Daniels L."/>
            <person name="Tempest H.G."/>
            <person name="Robertson L."/>
            <person name="Masabanda J.S."/>
            <person name="Griffin D.K."/>
            <person name="Vignal A."/>
            <person name="Fillon V."/>
            <person name="Jacobbson L."/>
            <person name="Kerje S."/>
            <person name="Andersson L."/>
            <person name="Crooijmans R.P."/>
            <person name="Aerts J."/>
            <person name="van der Poel J.J."/>
            <person name="Ellegren H."/>
            <person name="Caldwell R.B."/>
            <person name="Hubbard S.J."/>
            <person name="Grafham D.V."/>
            <person name="Kierzek A.M."/>
            <person name="McLaren S.R."/>
            <person name="Overton I.M."/>
            <person name="Arakawa H."/>
            <person name="Beattie K.J."/>
            <person name="Bezzubov Y."/>
            <person name="Boardman P.E."/>
            <person name="Bonfield J.K."/>
            <person name="Croning M.D.R."/>
            <person name="Davies R.M."/>
            <person name="Francis M.D."/>
            <person name="Humphray S.J."/>
            <person name="Scott C.E."/>
            <person name="Taylor R.G."/>
            <person name="Tickle C."/>
            <person name="Brown W.R.A."/>
            <person name="Rogers J."/>
            <person name="Buerstedde J.-M."/>
            <person name="Wilson S.A."/>
            <person name="Stubbs L."/>
            <person name="Ovcharenko I."/>
            <person name="Gordon L."/>
            <person name="Lucas S."/>
            <person name="Miller M.M."/>
            <person name="Inoko H."/>
            <person name="Shiina T."/>
            <person name="Kaufman J."/>
            <person name="Salomonsen J."/>
            <person name="Skjoedt K."/>
            <person name="Wong G.K.-S."/>
            <person name="Wang J."/>
            <person name="Liu B."/>
            <person name="Wang J."/>
            <person name="Yu J."/>
            <person name="Yang H."/>
            <person name="Nefedov M."/>
            <person name="Koriabine M."/>
            <person name="Dejong P.J."/>
            <person name="Goodstadt L."/>
            <person name="Webber C."/>
            <person name="Dickens N.J."/>
            <person name="Letunic I."/>
            <person name="Suyama M."/>
            <person name="Torrents D."/>
            <person name="von Mering C."/>
            <person name="Zdobnov E.M."/>
            <person name="Makova K."/>
            <person name="Nekrutenko A."/>
            <person name="Elnitski L."/>
            <person name="Eswara P."/>
            <person name="King D.C."/>
            <person name="Yang S.-P."/>
            <person name="Tyekucheva S."/>
            <person name="Radakrishnan A."/>
            <person name="Harris R.S."/>
            <person name="Chiaromonte F."/>
            <person name="Taylor J."/>
            <person name="He J."/>
            <person name="Rijnkels M."/>
            <person name="Griffiths-Jones S."/>
            <person name="Ureta-Vidal A."/>
            <person name="Hoffman M.M."/>
            <person name="Severin J."/>
            <person name="Searle S.M.J."/>
            <person name="Law A.S."/>
            <person name="Speed D."/>
            <person name="Waddington D."/>
            <person name="Cheng Z."/>
            <person name="Tuzun E."/>
            <person name="Eichler E."/>
            <person name="Bao Z."/>
            <person name="Flicek P."/>
            <person name="Shteynberg D.D."/>
            <person name="Brent M.R."/>
            <person name="Bye J.M."/>
            <person name="Huckle E.J."/>
            <person name="Chatterji S."/>
            <person name="Dewey C."/>
            <person name="Pachter L."/>
            <person name="Kouranov A."/>
            <person name="Mourelatos Z."/>
            <person name="Hatzigeorgiou A.G."/>
            <person name="Paterson A.H."/>
            <person name="Ivarie R."/>
            <person name="Brandstrom M."/>
            <person name="Axelsson E."/>
            <person name="Backstrom N."/>
            <person name="Berlin S."/>
            <person name="Webster M.T."/>
            <person name="Pourquie O."/>
            <person name="Reymond A."/>
            <person name="Ucla C."/>
            <person name="Antonarakis S.E."/>
            <person name="Long M."/>
            <person name="Emerson J.J."/>
            <person name="Betran E."/>
            <person name="Dupanloup I."/>
            <person name="Kaessmann H."/>
            <person name="Hinrichs A.S."/>
            <person name="Bejerano G."/>
            <person name="Furey T.S."/>
            <person name="Harte R.A."/>
            <person name="Raney B."/>
            <person name="Siepel A."/>
            <person name="Kent W.J."/>
            <person name="Haussler D."/>
            <person name="Eyras E."/>
            <person name="Castelo R."/>
            <person name="Abril J.F."/>
            <person name="Castellano S."/>
            <person name="Camara F."/>
            <person name="Parra G."/>
            <person name="Guigo R."/>
            <person name="Bourque G."/>
            <person name="Tesler G."/>
            <person name="Pevzner P.A."/>
            <person name="Smit A."/>
            <person name="Fulton L.A."/>
            <person name="Mardis E.R."/>
            <person name="Wilson R.K."/>
        </authorList>
    </citation>
    <scope>NUCLEOTIDE SEQUENCE [LARGE SCALE GENOMIC DNA]</scope>
    <source>
        <strain>Red jungle fowl</strain>
    </source>
</reference>
<proteinExistence type="inferred from homology"/>
<feature type="chain" id="PRO_0000416035" description="Phosphatidylserine synthase 2">
    <location>
        <begin position="1"/>
        <end position="442"/>
    </location>
</feature>
<feature type="topological domain" description="Cytoplasmic" evidence="2">
    <location>
        <begin position="1"/>
        <end position="40"/>
    </location>
</feature>
<feature type="transmembrane region" description="Helical" evidence="2">
    <location>
        <begin position="41"/>
        <end position="61"/>
    </location>
</feature>
<feature type="topological domain" description="Lumenal" evidence="2">
    <location>
        <begin position="62"/>
        <end position="74"/>
    </location>
</feature>
<feature type="transmembrane region" description="Helical" evidence="2">
    <location>
        <begin position="75"/>
        <end position="95"/>
    </location>
</feature>
<feature type="topological domain" description="Cytoplasmic" evidence="2">
    <location>
        <begin position="96"/>
        <end position="104"/>
    </location>
</feature>
<feature type="transmembrane region" description="Helical" evidence="2">
    <location>
        <begin position="105"/>
        <end position="125"/>
    </location>
</feature>
<feature type="topological domain" description="Lumenal" evidence="2">
    <location>
        <begin position="126"/>
        <end position="291"/>
    </location>
</feature>
<feature type="transmembrane region" description="Helical" evidence="2">
    <location>
        <begin position="292"/>
        <end position="312"/>
    </location>
</feature>
<feature type="topological domain" description="Cytoplasmic" evidence="2">
    <location>
        <position position="313"/>
    </location>
</feature>
<feature type="transmembrane region" description="Helical" evidence="2">
    <location>
        <begin position="314"/>
        <end position="334"/>
    </location>
</feature>
<feature type="topological domain" description="Lumenal" evidence="2">
    <location>
        <begin position="335"/>
        <end position="354"/>
    </location>
</feature>
<feature type="transmembrane region" description="Helical" evidence="2">
    <location>
        <begin position="355"/>
        <end position="375"/>
    </location>
</feature>
<feature type="topological domain" description="Cytoplasmic" evidence="2">
    <location>
        <begin position="376"/>
        <end position="381"/>
    </location>
</feature>
<feature type="transmembrane region" description="Helical" evidence="2">
    <location>
        <begin position="382"/>
        <end position="402"/>
    </location>
</feature>
<feature type="topological domain" description="Lumenal" evidence="2">
    <location>
        <begin position="403"/>
        <end position="442"/>
    </location>
</feature>
<feature type="glycosylation site" description="N-linked (GlcNAc...) asparagine" evidence="2">
    <location>
        <position position="159"/>
    </location>
</feature>
<feature type="glycosylation site" description="N-linked (GlcNAc...) asparagine" evidence="2">
    <location>
        <position position="215"/>
    </location>
</feature>
<keyword id="KW-0256">Endoplasmic reticulum</keyword>
<keyword id="KW-0325">Glycoprotein</keyword>
<keyword id="KW-0444">Lipid biosynthesis</keyword>
<keyword id="KW-0443">Lipid metabolism</keyword>
<keyword id="KW-0472">Membrane</keyword>
<keyword id="KW-0594">Phospholipid biosynthesis</keyword>
<keyword id="KW-1208">Phospholipid metabolism</keyword>
<keyword id="KW-1185">Reference proteome</keyword>
<keyword id="KW-0808">Transferase</keyword>
<keyword id="KW-0812">Transmembrane</keyword>
<keyword id="KW-1133">Transmembrane helix</keyword>
<protein>
    <recommendedName>
        <fullName>Phosphatidylserine synthase 2</fullName>
        <shortName>PSS-2</shortName>
        <shortName>PtdSer synthase 2</shortName>
        <ecNumber evidence="1">2.7.8.29</ecNumber>
    </recommendedName>
    <alternativeName>
        <fullName>Serine-exchange enzyme II</fullName>
    </alternativeName>
</protein>